<accession>Q2FVX9</accession>
<sequence length="164" mass="17694">MTEFTHINQQGHAKMVDVSDKQITKRTAVAHSSITVNETIFKQISNNTNTKGNVLNTAQIAGIMAAKNTSTLIPMCHPLPLTGIDVHFSWDETNAPLYTLNIQTTVSTTGKTGVEMEALTAASATALTIYDMTKAVDKGMIIGETYLESKSGGKSGDFQRQSNQ</sequence>
<evidence type="ECO:0000255" key="1">
    <source>
        <dbReference type="HAMAP-Rule" id="MF_01224"/>
    </source>
</evidence>
<evidence type="ECO:0000269" key="2">
    <source>
    </source>
</evidence>
<name>MOAC_STAA8</name>
<keyword id="KW-0456">Lyase</keyword>
<keyword id="KW-0501">Molybdenum cofactor biosynthesis</keyword>
<keyword id="KW-1185">Reference proteome</keyword>
<comment type="function">
    <text evidence="1 2">Catalyzes the conversion of (8S)-3',8-cyclo-7,8-dihydroguanosine 5'-triphosphate to cyclic pyranopterin monophosphate (cPMP).</text>
</comment>
<comment type="catalytic activity">
    <reaction evidence="1 2">
        <text>(8S)-3',8-cyclo-7,8-dihydroguanosine 5'-triphosphate = cyclic pyranopterin phosphate + diphosphate</text>
        <dbReference type="Rhea" id="RHEA:49580"/>
        <dbReference type="ChEBI" id="CHEBI:33019"/>
        <dbReference type="ChEBI" id="CHEBI:59648"/>
        <dbReference type="ChEBI" id="CHEBI:131766"/>
        <dbReference type="EC" id="4.6.1.17"/>
    </reaction>
</comment>
<comment type="biophysicochemical properties">
    <kinetics>
        <KM evidence="2">0.06 uM for (8S)-3',8-cyclo-7,8-dihydroguanosine 5'-triphosphate</KM>
        <text evidence="2">kcat is 0.17 min(-1).</text>
    </kinetics>
</comment>
<comment type="pathway">
    <text evidence="1">Cofactor biosynthesis; molybdopterin biosynthesis.</text>
</comment>
<comment type="subunit">
    <text evidence="1">Homohexamer; trimer of dimers.</text>
</comment>
<comment type="similarity">
    <text evidence="1">Belongs to the MoaC family.</text>
</comment>
<reference key="1">
    <citation type="book" date="2006" name="Gram positive pathogens, 2nd edition">
        <title>The Staphylococcus aureus NCTC 8325 genome.</title>
        <editorList>
            <person name="Fischetti V."/>
            <person name="Novick R."/>
            <person name="Ferretti J."/>
            <person name="Portnoy D."/>
            <person name="Rood J."/>
        </editorList>
        <authorList>
            <person name="Gillaspy A.F."/>
            <person name="Worrell V."/>
            <person name="Orvis J."/>
            <person name="Roe B.A."/>
            <person name="Dyer D.W."/>
            <person name="Iandolo J.J."/>
        </authorList>
    </citation>
    <scope>NUCLEOTIDE SEQUENCE [LARGE SCALE GENOMIC DNA]</scope>
    <source>
        <strain>NCTC 8325 / PS 47</strain>
    </source>
</reference>
<reference key="2">
    <citation type="journal article" date="2013" name="J. Am. Chem. Soc.">
        <title>Identification of a cyclic nucleotide as a cryptic intermediate in molybdenum cofactor biosynthesis.</title>
        <authorList>
            <person name="Hover B.M."/>
            <person name="Loksztejn A."/>
            <person name="Ribeiro A.A."/>
            <person name="Yokoyama K."/>
        </authorList>
    </citation>
    <scope>FUNCTION</scope>
    <scope>CATALYTIC ACTIVITY</scope>
    <scope>BIOPHYSICOCHEMICAL PROPERTIES</scope>
</reference>
<organism>
    <name type="scientific">Staphylococcus aureus (strain NCTC 8325 / PS 47)</name>
    <dbReference type="NCBI Taxonomy" id="93061"/>
    <lineage>
        <taxon>Bacteria</taxon>
        <taxon>Bacillati</taxon>
        <taxon>Bacillota</taxon>
        <taxon>Bacilli</taxon>
        <taxon>Bacillales</taxon>
        <taxon>Staphylococcaceae</taxon>
        <taxon>Staphylococcus</taxon>
    </lineage>
</organism>
<dbReference type="EC" id="4.6.1.17" evidence="1 2"/>
<dbReference type="EMBL" id="CP000253">
    <property type="protein sequence ID" value="ABD31557.1"/>
    <property type="molecule type" value="Genomic_DNA"/>
</dbReference>
<dbReference type="RefSeq" id="WP_000134528.1">
    <property type="nucleotide sequence ID" value="NZ_LS483365.1"/>
</dbReference>
<dbReference type="RefSeq" id="YP_501006.1">
    <property type="nucleotide sequence ID" value="NC_007795.1"/>
</dbReference>
<dbReference type="SMR" id="Q2FVX9"/>
<dbReference type="STRING" id="93061.SAOUHSC_02543"/>
<dbReference type="PaxDb" id="1280-SAXN108_2523"/>
<dbReference type="GeneID" id="3921132"/>
<dbReference type="KEGG" id="sao:SAOUHSC_02543"/>
<dbReference type="PATRIC" id="fig|93061.5.peg.2293"/>
<dbReference type="eggNOG" id="COG0315">
    <property type="taxonomic scope" value="Bacteria"/>
</dbReference>
<dbReference type="HOGENOM" id="CLU_074693_1_1_9"/>
<dbReference type="OrthoDB" id="9794429at2"/>
<dbReference type="UniPathway" id="UPA00344"/>
<dbReference type="PRO" id="PR:Q2FVX9"/>
<dbReference type="Proteomes" id="UP000008816">
    <property type="component" value="Chromosome"/>
</dbReference>
<dbReference type="GO" id="GO:0061799">
    <property type="term" value="F:cyclic pyranopterin monophosphate synthase activity"/>
    <property type="evidence" value="ECO:0007669"/>
    <property type="project" value="UniProtKB-UniRule"/>
</dbReference>
<dbReference type="GO" id="GO:0006777">
    <property type="term" value="P:Mo-molybdopterin cofactor biosynthetic process"/>
    <property type="evidence" value="ECO:0007669"/>
    <property type="project" value="UniProtKB-UniRule"/>
</dbReference>
<dbReference type="CDD" id="cd01420">
    <property type="entry name" value="MoaC_PE"/>
    <property type="match status" value="1"/>
</dbReference>
<dbReference type="Gene3D" id="3.30.70.640">
    <property type="entry name" value="Molybdopterin cofactor biosynthesis C (MoaC) domain"/>
    <property type="match status" value="1"/>
</dbReference>
<dbReference type="HAMAP" id="MF_01224_B">
    <property type="entry name" value="MoaC_B"/>
    <property type="match status" value="1"/>
</dbReference>
<dbReference type="InterPro" id="IPR023045">
    <property type="entry name" value="MoaC"/>
</dbReference>
<dbReference type="InterPro" id="IPR047594">
    <property type="entry name" value="MoaC_bact/euk"/>
</dbReference>
<dbReference type="InterPro" id="IPR036522">
    <property type="entry name" value="MoaC_sf"/>
</dbReference>
<dbReference type="InterPro" id="IPR050105">
    <property type="entry name" value="MoCo_biosynth_MoaA/MoaC"/>
</dbReference>
<dbReference type="InterPro" id="IPR002820">
    <property type="entry name" value="Mopterin_CF_biosynth-C_dom"/>
</dbReference>
<dbReference type="NCBIfam" id="TIGR00581">
    <property type="entry name" value="moaC"/>
    <property type="match status" value="1"/>
</dbReference>
<dbReference type="NCBIfam" id="NF006870">
    <property type="entry name" value="PRK09364.1"/>
    <property type="match status" value="1"/>
</dbReference>
<dbReference type="PANTHER" id="PTHR22960">
    <property type="entry name" value="MOLYBDOPTERIN COFACTOR SYNTHESIS PROTEIN A"/>
    <property type="match status" value="1"/>
</dbReference>
<dbReference type="Pfam" id="PF01967">
    <property type="entry name" value="MoaC"/>
    <property type="match status" value="1"/>
</dbReference>
<dbReference type="SUPFAM" id="SSF55040">
    <property type="entry name" value="Molybdenum cofactor biosynthesis protein C, MoaC"/>
    <property type="match status" value="1"/>
</dbReference>
<feature type="chain" id="PRO_1000054151" description="Cyclic pyranopterin monophosphate synthase">
    <location>
        <begin position="1"/>
        <end position="164"/>
    </location>
</feature>
<feature type="active site" evidence="1">
    <location>
        <position position="131"/>
    </location>
</feature>
<feature type="binding site" evidence="1">
    <location>
        <begin position="75"/>
        <end position="77"/>
    </location>
    <ligand>
        <name>substrate</name>
    </ligand>
</feature>
<feature type="binding site" evidence="1">
    <location>
        <begin position="116"/>
        <end position="117"/>
    </location>
    <ligand>
        <name>substrate</name>
    </ligand>
</feature>
<proteinExistence type="evidence at protein level"/>
<gene>
    <name evidence="1" type="primary">moaC</name>
    <name type="ordered locus">SAOUHSC_02543</name>
</gene>
<protein>
    <recommendedName>
        <fullName evidence="1">Cyclic pyranopterin monophosphate synthase</fullName>
        <ecNumber evidence="1 2">4.6.1.17</ecNumber>
    </recommendedName>
    <alternativeName>
        <fullName evidence="1">Molybdenum cofactor biosynthesis protein C</fullName>
    </alternativeName>
</protein>